<evidence type="ECO:0000255" key="1">
    <source>
        <dbReference type="HAMAP-Rule" id="MF_01040"/>
    </source>
</evidence>
<dbReference type="EC" id="5.4.2.-" evidence="1"/>
<dbReference type="EMBL" id="AM933173">
    <property type="protein sequence ID" value="CAR40169.1"/>
    <property type="molecule type" value="Genomic_DNA"/>
</dbReference>
<dbReference type="RefSeq" id="WP_000942363.1">
    <property type="nucleotide sequence ID" value="NC_011274.1"/>
</dbReference>
<dbReference type="SMR" id="B5R9W3"/>
<dbReference type="KEGG" id="seg:SG4407"/>
<dbReference type="HOGENOM" id="CLU_033323_9_5_6"/>
<dbReference type="UniPathway" id="UPA00109">
    <property type="reaction ID" value="UER00186"/>
</dbReference>
<dbReference type="Proteomes" id="UP000008321">
    <property type="component" value="Chromosome"/>
</dbReference>
<dbReference type="GO" id="GO:0005737">
    <property type="term" value="C:cytoplasm"/>
    <property type="evidence" value="ECO:0007669"/>
    <property type="project" value="TreeGrafter"/>
</dbReference>
<dbReference type="GO" id="GO:0016791">
    <property type="term" value="F:phosphatase activity"/>
    <property type="evidence" value="ECO:0007669"/>
    <property type="project" value="TreeGrafter"/>
</dbReference>
<dbReference type="GO" id="GO:0004619">
    <property type="term" value="F:phosphoglycerate mutase activity"/>
    <property type="evidence" value="ECO:0007669"/>
    <property type="project" value="UniProtKB-UniRule"/>
</dbReference>
<dbReference type="GO" id="GO:0006096">
    <property type="term" value="P:glycolytic process"/>
    <property type="evidence" value="ECO:0007669"/>
    <property type="project" value="UniProtKB-UniRule"/>
</dbReference>
<dbReference type="CDD" id="cd07067">
    <property type="entry name" value="HP_PGM_like"/>
    <property type="match status" value="1"/>
</dbReference>
<dbReference type="Gene3D" id="3.40.50.1240">
    <property type="entry name" value="Phosphoglycerate mutase-like"/>
    <property type="match status" value="1"/>
</dbReference>
<dbReference type="HAMAP" id="MF_01040">
    <property type="entry name" value="PGAM_GpmB"/>
    <property type="match status" value="1"/>
</dbReference>
<dbReference type="InterPro" id="IPR013078">
    <property type="entry name" value="His_Pase_superF_clade-1"/>
</dbReference>
<dbReference type="InterPro" id="IPR029033">
    <property type="entry name" value="His_PPase_superfam"/>
</dbReference>
<dbReference type="InterPro" id="IPR001345">
    <property type="entry name" value="PG/BPGM_mutase_AS"/>
</dbReference>
<dbReference type="InterPro" id="IPR050275">
    <property type="entry name" value="PGM_Phosphatase"/>
</dbReference>
<dbReference type="InterPro" id="IPR023086">
    <property type="entry name" value="Phosphoglycerate_mutase_GpmB"/>
</dbReference>
<dbReference type="NCBIfam" id="NF002901">
    <property type="entry name" value="PRK03482.1"/>
    <property type="match status" value="1"/>
</dbReference>
<dbReference type="PANTHER" id="PTHR48100">
    <property type="entry name" value="BROAD-SPECIFICITY PHOSPHATASE YOR283W-RELATED"/>
    <property type="match status" value="1"/>
</dbReference>
<dbReference type="PANTHER" id="PTHR48100:SF1">
    <property type="entry name" value="HISTIDINE PHOSPHATASE FAMILY PROTEIN-RELATED"/>
    <property type="match status" value="1"/>
</dbReference>
<dbReference type="Pfam" id="PF00300">
    <property type="entry name" value="His_Phos_1"/>
    <property type="match status" value="1"/>
</dbReference>
<dbReference type="SMART" id="SM00855">
    <property type="entry name" value="PGAM"/>
    <property type="match status" value="1"/>
</dbReference>
<dbReference type="SUPFAM" id="SSF53254">
    <property type="entry name" value="Phosphoglycerate mutase-like"/>
    <property type="match status" value="1"/>
</dbReference>
<dbReference type="PROSITE" id="PS00175">
    <property type="entry name" value="PG_MUTASE"/>
    <property type="match status" value="1"/>
</dbReference>
<proteinExistence type="inferred from homology"/>
<accession>B5R9W3</accession>
<protein>
    <recommendedName>
        <fullName evidence="1">Probable phosphoglycerate mutase GpmB</fullName>
        <ecNumber evidence="1">5.4.2.-</ecNumber>
    </recommendedName>
    <alternativeName>
        <fullName evidence="1">PGAM</fullName>
    </alternativeName>
    <alternativeName>
        <fullName evidence="1">Phosphoglyceromutase</fullName>
    </alternativeName>
</protein>
<comment type="catalytic activity">
    <reaction evidence="1">
        <text>(2R)-2-phosphoglycerate = (2R)-3-phosphoglycerate</text>
        <dbReference type="Rhea" id="RHEA:15901"/>
        <dbReference type="ChEBI" id="CHEBI:58272"/>
        <dbReference type="ChEBI" id="CHEBI:58289"/>
    </reaction>
</comment>
<comment type="pathway">
    <text evidence="1">Carbohydrate degradation; glycolysis; pyruvate from D-glyceraldehyde 3-phosphate: step 3/5.</text>
</comment>
<comment type="similarity">
    <text evidence="1">Belongs to the phosphoglycerate mutase family. GpmB subfamily.</text>
</comment>
<keyword id="KW-0324">Glycolysis</keyword>
<keyword id="KW-0413">Isomerase</keyword>
<feature type="chain" id="PRO_1000136014" description="Probable phosphoglycerate mutase GpmB">
    <location>
        <begin position="1"/>
        <end position="215"/>
    </location>
</feature>
<feature type="active site" description="Tele-phosphohistidine intermediate" evidence="1">
    <location>
        <position position="9"/>
    </location>
</feature>
<feature type="active site" description="Proton donor/acceptor" evidence="1">
    <location>
        <position position="82"/>
    </location>
</feature>
<feature type="binding site" evidence="1">
    <location>
        <begin position="8"/>
        <end position="15"/>
    </location>
    <ligand>
        <name>substrate</name>
    </ligand>
</feature>
<feature type="binding site" evidence="1">
    <location>
        <begin position="21"/>
        <end position="22"/>
    </location>
    <ligand>
        <name>substrate</name>
    </ligand>
</feature>
<feature type="binding site" evidence="1">
    <location>
        <position position="58"/>
    </location>
    <ligand>
        <name>substrate</name>
    </ligand>
</feature>
<feature type="binding site" evidence="1">
    <location>
        <position position="60"/>
    </location>
    <ligand>
        <name>substrate</name>
    </ligand>
</feature>
<feature type="binding site" evidence="1">
    <location>
        <begin position="82"/>
        <end position="85"/>
    </location>
    <ligand>
        <name>substrate</name>
    </ligand>
</feature>
<feature type="binding site" evidence="1">
    <location>
        <begin position="104"/>
        <end position="105"/>
    </location>
    <ligand>
        <name>substrate</name>
    </ligand>
</feature>
<feature type="binding site" evidence="1">
    <location>
        <begin position="151"/>
        <end position="152"/>
    </location>
    <ligand>
        <name>substrate</name>
    </ligand>
</feature>
<feature type="site" description="Transition state stabilizer" evidence="1">
    <location>
        <position position="150"/>
    </location>
</feature>
<sequence>MLQVYLVRHGETQWNAERRIQGQSDSPLTAKGEQQAMQVGERARSLGITHIISSDLGRTKRTAEIIAQACGCDITFDSRLRELDMGVLEKRQIDSLTEEEEGWRRQLVNGTQDGRIPGGESMQELSDRVHAALASCLELPQGSRPLLVSHGIALGCLVSTILGLPAWAERRLRLRNCSISRIDYQESQWLASGWVVETAGDVSHLDAPALDELQR</sequence>
<name>GPMB_SALG2</name>
<gene>
    <name evidence="1" type="primary">gpmB</name>
    <name type="ordered locus">SG4407</name>
</gene>
<reference key="1">
    <citation type="journal article" date="2008" name="Genome Res.">
        <title>Comparative genome analysis of Salmonella enteritidis PT4 and Salmonella gallinarum 287/91 provides insights into evolutionary and host adaptation pathways.</title>
        <authorList>
            <person name="Thomson N.R."/>
            <person name="Clayton D.J."/>
            <person name="Windhorst D."/>
            <person name="Vernikos G."/>
            <person name="Davidson S."/>
            <person name="Churcher C."/>
            <person name="Quail M.A."/>
            <person name="Stevens M."/>
            <person name="Jones M.A."/>
            <person name="Watson M."/>
            <person name="Barron A."/>
            <person name="Layton A."/>
            <person name="Pickard D."/>
            <person name="Kingsley R.A."/>
            <person name="Bignell A."/>
            <person name="Clark L."/>
            <person name="Harris B."/>
            <person name="Ormond D."/>
            <person name="Abdellah Z."/>
            <person name="Brooks K."/>
            <person name="Cherevach I."/>
            <person name="Chillingworth T."/>
            <person name="Woodward J."/>
            <person name="Norberczak H."/>
            <person name="Lord A."/>
            <person name="Arrowsmith C."/>
            <person name="Jagels K."/>
            <person name="Moule S."/>
            <person name="Mungall K."/>
            <person name="Saunders M."/>
            <person name="Whitehead S."/>
            <person name="Chabalgoity J.A."/>
            <person name="Maskell D."/>
            <person name="Humphreys T."/>
            <person name="Roberts M."/>
            <person name="Barrow P.A."/>
            <person name="Dougan G."/>
            <person name="Parkhill J."/>
        </authorList>
    </citation>
    <scope>NUCLEOTIDE SEQUENCE [LARGE SCALE GENOMIC DNA]</scope>
    <source>
        <strain>287/91 / NCTC 13346</strain>
    </source>
</reference>
<organism>
    <name type="scientific">Salmonella gallinarum (strain 287/91 / NCTC 13346)</name>
    <dbReference type="NCBI Taxonomy" id="550538"/>
    <lineage>
        <taxon>Bacteria</taxon>
        <taxon>Pseudomonadati</taxon>
        <taxon>Pseudomonadota</taxon>
        <taxon>Gammaproteobacteria</taxon>
        <taxon>Enterobacterales</taxon>
        <taxon>Enterobacteriaceae</taxon>
        <taxon>Salmonella</taxon>
    </lineage>
</organism>